<protein>
    <recommendedName>
        <fullName evidence="2">RNA polymerase-associated protein RapA</fullName>
        <ecNumber evidence="2">3.6.4.-</ecNumber>
    </recommendedName>
    <alternativeName>
        <fullName evidence="2">ATP-dependent helicase HepA</fullName>
    </alternativeName>
</protein>
<accession>Q8FL92</accession>
<sequence>MPFTLGQRWISDTESELGLGTVVAVDARTVTLLFPSTGENRLYARSDSPVTRVMFNPGDTITSHDGWQMQVEEVKEENGLLTYIGTRLDTEESGVALREVFLDSKLVFSKPQDRLFAGQIDRMDRFALRYRARKYSSEQFRMPYSGLRGQRTSLIPHQLNIAHDVGRRHAPRVLLADEVGLGKTIEAGMILHQQLLSGAAERVLIIVPETLQHQWLVEMLRRFNLRFALFDDERYAEAQHDAYNPFDTEQLVICSLDFARRSKQRLEHLCEAEWDLLVVDEAHHLVWSEDAPSREYQAIEQLAEHVPGVLLLTATPEQLGMESHFARLRLLDPNRFHDFAQFVEEQKNYRPVADAVAMLLAGNKLSNDELNMLGEMIGEQDIEPLLQAANSDSEDAQSARQELVSMLMDRHGTSRVLFRNTRNGVKGFPKRELHTIKLPLPTQYQTAIKVSGIMGARKSAEDRARDMLYPERIYQEFEGDNATWWNFDPRVEWLMGYLTSHRSQKVLVICAKAATALQLEQVLREREGIRAAVFHEGMSIIERDRAAAWFAEEDTGAQVLLCSEIGSEGRNFQFASHMVMFDLPFNPDLLEQRIGRLDRIGQAHDIQIHVPYLEKTAQSVLVRWYHEGLDAFEHTCPTGRTIYDSVYNDLINYLASPDETEGFDDLIKNCREQHEALKAQLEQGRDRLLEIHSNGGEKAQALAESIEEQDDDTNLIAFAMNLFDIIGINQDDRGDNMIVLTPSDHMLVPDFPGLSEDGITITFDREVALAREDAQFITWEHPLIRNGLDLILSGDTGSSTISLLKNKALPVGTLLVELIYVVEAQAPKQLQLNRFLPPTPVRMLLDKNGNNLAAQVEFETFNRQLNAVNRHTGSKLVNAVQQDVHAILQLGEAQIEKSARALIDAARNEADEKLSAELSRLEALRAVNPNIRDDELTAIESNRQQVMESLDQAGWRLDALRLIVVTHQ</sequence>
<evidence type="ECO:0000250" key="1"/>
<evidence type="ECO:0000255" key="2">
    <source>
        <dbReference type="HAMAP-Rule" id="MF_01821"/>
    </source>
</evidence>
<proteinExistence type="inferred from homology"/>
<name>RAPA_ECOL6</name>
<comment type="function">
    <text evidence="2">Transcription regulator that activates transcription by stimulating RNA polymerase (RNAP) recycling in case of stress conditions such as supercoiled DNA or high salt concentrations. Probably acts by releasing the RNAP, when it is trapped or immobilized on tightly supercoiled DNA. Does not activate transcription on linear DNA. Probably not involved in DNA repair.</text>
</comment>
<comment type="subunit">
    <text evidence="2">Interacts with the RNAP. Has a higher affinity for the core RNAP than for the holoenzyme. Its ATPase activity is stimulated by binding to RNAP.</text>
</comment>
<comment type="similarity">
    <text evidence="2">Belongs to the SNF2/RAD54 helicase family. RapA subfamily.</text>
</comment>
<feature type="initiator methionine" description="Removed" evidence="1">
    <location>
        <position position="1"/>
    </location>
</feature>
<feature type="chain" id="PRO_0000207174" description="RNA polymerase-associated protein RapA">
    <location>
        <begin position="2"/>
        <end position="968"/>
    </location>
</feature>
<feature type="domain" description="Helicase ATP-binding" evidence="2">
    <location>
        <begin position="164"/>
        <end position="334"/>
    </location>
</feature>
<feature type="domain" description="Helicase C-terminal" evidence="2">
    <location>
        <begin position="490"/>
        <end position="662"/>
    </location>
</feature>
<feature type="short sequence motif" description="DEAH box">
    <location>
        <begin position="280"/>
        <end position="283"/>
    </location>
</feature>
<feature type="binding site" evidence="2">
    <location>
        <begin position="177"/>
        <end position="184"/>
    </location>
    <ligand>
        <name>ATP</name>
        <dbReference type="ChEBI" id="CHEBI:30616"/>
    </ligand>
</feature>
<keyword id="KW-0010">Activator</keyword>
<keyword id="KW-0067">ATP-binding</keyword>
<keyword id="KW-0238">DNA-binding</keyword>
<keyword id="KW-0347">Helicase</keyword>
<keyword id="KW-0378">Hydrolase</keyword>
<keyword id="KW-0547">Nucleotide-binding</keyword>
<keyword id="KW-1185">Reference proteome</keyword>
<keyword id="KW-0804">Transcription</keyword>
<keyword id="KW-0805">Transcription regulation</keyword>
<gene>
    <name evidence="2" type="primary">rapA</name>
    <name type="synonym">hepA</name>
    <name type="ordered locus">c0070</name>
</gene>
<reference key="1">
    <citation type="journal article" date="2002" name="Proc. Natl. Acad. Sci. U.S.A.">
        <title>Extensive mosaic structure revealed by the complete genome sequence of uropathogenic Escherichia coli.</title>
        <authorList>
            <person name="Welch R.A."/>
            <person name="Burland V."/>
            <person name="Plunkett G. III"/>
            <person name="Redford P."/>
            <person name="Roesch P."/>
            <person name="Rasko D."/>
            <person name="Buckles E.L."/>
            <person name="Liou S.-R."/>
            <person name="Boutin A."/>
            <person name="Hackett J."/>
            <person name="Stroud D."/>
            <person name="Mayhew G.F."/>
            <person name="Rose D.J."/>
            <person name="Zhou S."/>
            <person name="Schwartz D.C."/>
            <person name="Perna N.T."/>
            <person name="Mobley H.L.T."/>
            <person name="Donnenberg M.S."/>
            <person name="Blattner F.R."/>
        </authorList>
    </citation>
    <scope>NUCLEOTIDE SEQUENCE [LARGE SCALE GENOMIC DNA]</scope>
    <source>
        <strain>CFT073 / ATCC 700928 / UPEC</strain>
    </source>
</reference>
<dbReference type="EC" id="3.6.4.-" evidence="2"/>
<dbReference type="EMBL" id="AE014075">
    <property type="protein sequence ID" value="AAN78566.1"/>
    <property type="molecule type" value="Genomic_DNA"/>
</dbReference>
<dbReference type="RefSeq" id="WP_001117001.1">
    <property type="nucleotide sequence ID" value="NZ_CP051263.1"/>
</dbReference>
<dbReference type="SMR" id="Q8FL92"/>
<dbReference type="STRING" id="199310.c0070"/>
<dbReference type="KEGG" id="ecc:c0070"/>
<dbReference type="eggNOG" id="COG0553">
    <property type="taxonomic scope" value="Bacteria"/>
</dbReference>
<dbReference type="HOGENOM" id="CLU_011520_0_0_6"/>
<dbReference type="BioCyc" id="ECOL199310:C0070-MONOMER"/>
<dbReference type="Proteomes" id="UP000001410">
    <property type="component" value="Chromosome"/>
</dbReference>
<dbReference type="GO" id="GO:0005524">
    <property type="term" value="F:ATP binding"/>
    <property type="evidence" value="ECO:0007669"/>
    <property type="project" value="UniProtKB-UniRule"/>
</dbReference>
<dbReference type="GO" id="GO:0003677">
    <property type="term" value="F:DNA binding"/>
    <property type="evidence" value="ECO:0007669"/>
    <property type="project" value="UniProtKB-KW"/>
</dbReference>
<dbReference type="GO" id="GO:0004386">
    <property type="term" value="F:helicase activity"/>
    <property type="evidence" value="ECO:0007669"/>
    <property type="project" value="UniProtKB-UniRule"/>
</dbReference>
<dbReference type="GO" id="GO:0016817">
    <property type="term" value="F:hydrolase activity, acting on acid anhydrides"/>
    <property type="evidence" value="ECO:0007669"/>
    <property type="project" value="InterPro"/>
</dbReference>
<dbReference type="GO" id="GO:0006355">
    <property type="term" value="P:regulation of DNA-templated transcription"/>
    <property type="evidence" value="ECO:0007669"/>
    <property type="project" value="UniProtKB-UniRule"/>
</dbReference>
<dbReference type="CDD" id="cd18011">
    <property type="entry name" value="DEXDc_RapA"/>
    <property type="match status" value="1"/>
</dbReference>
<dbReference type="CDD" id="cd18793">
    <property type="entry name" value="SF2_C_SNF"/>
    <property type="match status" value="1"/>
</dbReference>
<dbReference type="FunFam" id="2.30.30.140:FF:000020">
    <property type="entry name" value="RNA polymerase-associated protein RapA"/>
    <property type="match status" value="1"/>
</dbReference>
<dbReference type="FunFam" id="2.30.30.930:FF:000001">
    <property type="entry name" value="RNA polymerase-associated protein RapA"/>
    <property type="match status" value="1"/>
</dbReference>
<dbReference type="FunFam" id="3.30.360.80:FF:000001">
    <property type="entry name" value="RNA polymerase-associated protein RapA"/>
    <property type="match status" value="1"/>
</dbReference>
<dbReference type="FunFam" id="3.40.50.10810:FF:000012">
    <property type="entry name" value="RNA polymerase-associated protein RapA"/>
    <property type="match status" value="1"/>
</dbReference>
<dbReference type="FunFam" id="3.40.50.300:FF:000350">
    <property type="entry name" value="RNA polymerase-associated protein RapA"/>
    <property type="match status" value="1"/>
</dbReference>
<dbReference type="Gene3D" id="2.30.30.140">
    <property type="match status" value="1"/>
</dbReference>
<dbReference type="Gene3D" id="2.30.30.930">
    <property type="match status" value="1"/>
</dbReference>
<dbReference type="Gene3D" id="3.30.360.80">
    <property type="match status" value="1"/>
</dbReference>
<dbReference type="Gene3D" id="6.10.140.1500">
    <property type="match status" value="1"/>
</dbReference>
<dbReference type="Gene3D" id="6.10.140.2230">
    <property type="match status" value="1"/>
</dbReference>
<dbReference type="Gene3D" id="3.40.50.300">
    <property type="entry name" value="P-loop containing nucleotide triphosphate hydrolases"/>
    <property type="match status" value="1"/>
</dbReference>
<dbReference type="Gene3D" id="3.40.50.10810">
    <property type="entry name" value="Tandem AAA-ATPase domain"/>
    <property type="match status" value="1"/>
</dbReference>
<dbReference type="HAMAP" id="MF_01821">
    <property type="entry name" value="Helicase_RapA"/>
    <property type="match status" value="1"/>
</dbReference>
<dbReference type="InterPro" id="IPR014001">
    <property type="entry name" value="Helicase_ATP-bd"/>
</dbReference>
<dbReference type="InterPro" id="IPR001650">
    <property type="entry name" value="Helicase_C-like"/>
</dbReference>
<dbReference type="InterPro" id="IPR023949">
    <property type="entry name" value="Helicase_RapA"/>
</dbReference>
<dbReference type="InterPro" id="IPR027417">
    <property type="entry name" value="P-loop_NTPase"/>
</dbReference>
<dbReference type="InterPro" id="IPR022737">
    <property type="entry name" value="RapA_C"/>
</dbReference>
<dbReference type="InterPro" id="IPR038718">
    <property type="entry name" value="SNF2-like_sf"/>
</dbReference>
<dbReference type="InterPro" id="IPR049730">
    <property type="entry name" value="SNF2/RAD54-like_C"/>
</dbReference>
<dbReference type="InterPro" id="IPR000330">
    <property type="entry name" value="SNF2_N"/>
</dbReference>
<dbReference type="InterPro" id="IPR040765">
    <property type="entry name" value="Tudor_1_RapA"/>
</dbReference>
<dbReference type="InterPro" id="IPR040766">
    <property type="entry name" value="Tudor_2_RapA"/>
</dbReference>
<dbReference type="NCBIfam" id="NF003426">
    <property type="entry name" value="PRK04914.1"/>
    <property type="match status" value="1"/>
</dbReference>
<dbReference type="PANTHER" id="PTHR45766">
    <property type="entry name" value="DNA ANNEALING HELICASE AND ENDONUCLEASE ZRANB3 FAMILY MEMBER"/>
    <property type="match status" value="1"/>
</dbReference>
<dbReference type="PANTHER" id="PTHR45766:SF6">
    <property type="entry name" value="SWI_SNF-RELATED MATRIX-ASSOCIATED ACTIN-DEPENDENT REGULATOR OF CHROMATIN SUBFAMILY A-LIKE PROTEIN 1"/>
    <property type="match status" value="1"/>
</dbReference>
<dbReference type="Pfam" id="PF00271">
    <property type="entry name" value="Helicase_C"/>
    <property type="match status" value="1"/>
</dbReference>
<dbReference type="Pfam" id="PF12137">
    <property type="entry name" value="RapA_C"/>
    <property type="match status" value="1"/>
</dbReference>
<dbReference type="Pfam" id="PF00176">
    <property type="entry name" value="SNF2-rel_dom"/>
    <property type="match status" value="1"/>
</dbReference>
<dbReference type="Pfam" id="PF18339">
    <property type="entry name" value="Tudor_1_RapA"/>
    <property type="match status" value="1"/>
</dbReference>
<dbReference type="Pfam" id="PF18337">
    <property type="entry name" value="Tudor_RapA"/>
    <property type="match status" value="1"/>
</dbReference>
<dbReference type="SMART" id="SM00487">
    <property type="entry name" value="DEXDc"/>
    <property type="match status" value="1"/>
</dbReference>
<dbReference type="SMART" id="SM00490">
    <property type="entry name" value="HELICc"/>
    <property type="match status" value="1"/>
</dbReference>
<dbReference type="SUPFAM" id="SSF52540">
    <property type="entry name" value="P-loop containing nucleoside triphosphate hydrolases"/>
    <property type="match status" value="2"/>
</dbReference>
<dbReference type="PROSITE" id="PS51192">
    <property type="entry name" value="HELICASE_ATP_BIND_1"/>
    <property type="match status" value="1"/>
</dbReference>
<dbReference type="PROSITE" id="PS51194">
    <property type="entry name" value="HELICASE_CTER"/>
    <property type="match status" value="1"/>
</dbReference>
<organism>
    <name type="scientific">Escherichia coli O6:H1 (strain CFT073 / ATCC 700928 / UPEC)</name>
    <dbReference type="NCBI Taxonomy" id="199310"/>
    <lineage>
        <taxon>Bacteria</taxon>
        <taxon>Pseudomonadati</taxon>
        <taxon>Pseudomonadota</taxon>
        <taxon>Gammaproteobacteria</taxon>
        <taxon>Enterobacterales</taxon>
        <taxon>Enterobacteriaceae</taxon>
        <taxon>Escherichia</taxon>
    </lineage>
</organism>